<evidence type="ECO:0000255" key="1">
    <source>
        <dbReference type="HAMAP-Rule" id="MF_01378"/>
    </source>
</evidence>
<evidence type="ECO:0000305" key="2"/>
<gene>
    <name evidence="1" type="primary">psbV</name>
    <name type="ordered locus">PMT_1427</name>
</gene>
<feature type="signal peptide" evidence="1">
    <location>
        <begin position="1"/>
        <end position="33"/>
    </location>
</feature>
<feature type="chain" id="PRO_5000096803" description="Photosystem II extrinsic protein V">
    <location>
        <begin position="34"/>
        <end position="170"/>
    </location>
</feature>
<feature type="binding site" description="covalent" evidence="1">
    <location>
        <position position="70"/>
    </location>
    <ligand>
        <name>heme c</name>
        <dbReference type="ChEBI" id="CHEBI:61717"/>
    </ligand>
</feature>
<feature type="binding site" description="covalent" evidence="1">
    <location>
        <position position="73"/>
    </location>
    <ligand>
        <name>heme c</name>
        <dbReference type="ChEBI" id="CHEBI:61717"/>
    </ligand>
</feature>
<feature type="binding site" description="axial binding residue" evidence="1">
    <location>
        <position position="74"/>
    </location>
    <ligand>
        <name>heme c</name>
        <dbReference type="ChEBI" id="CHEBI:61717"/>
    </ligand>
    <ligandPart>
        <name>Fe</name>
        <dbReference type="ChEBI" id="CHEBI:18248"/>
    </ligandPart>
</feature>
<feature type="binding site" description="axial binding residue" evidence="1">
    <location>
        <position position="125"/>
    </location>
    <ligand>
        <name>heme c</name>
        <dbReference type="ChEBI" id="CHEBI:61717"/>
    </ligand>
    <ligandPart>
        <name>Fe</name>
        <dbReference type="ChEBI" id="CHEBI:18248"/>
    </ligandPart>
</feature>
<sequence>MASLFASLGRSLIKLLIVLPVIIGLSISSPAMAAQWDAETLTVPAGSGGQQVTFTESEIKSASKLFKSNCATCHNQGVTKTNQNVGLDLEALSLASPARDNVDGLVEFLKNPMSYDGEYSIADTHPGISSSDVYVQMRTLNDEDLRLIAGYILTAEKVQGDQWGGGKIYF</sequence>
<keyword id="KW-0249">Electron transport</keyword>
<keyword id="KW-0349">Heme</keyword>
<keyword id="KW-0408">Iron</keyword>
<keyword id="KW-0472">Membrane</keyword>
<keyword id="KW-0479">Metal-binding</keyword>
<keyword id="KW-0602">Photosynthesis</keyword>
<keyword id="KW-0604">Photosystem II</keyword>
<keyword id="KW-1185">Reference proteome</keyword>
<keyword id="KW-0732">Signal</keyword>
<keyword id="KW-0793">Thylakoid</keyword>
<keyword id="KW-0813">Transport</keyword>
<dbReference type="EMBL" id="BX548175">
    <property type="protein sequence ID" value="CAE21602.1"/>
    <property type="molecule type" value="Genomic_DNA"/>
</dbReference>
<dbReference type="SMR" id="Q7V5W0"/>
<dbReference type="KEGG" id="pmt:PMT_1427"/>
<dbReference type="eggNOG" id="COG2010">
    <property type="taxonomic scope" value="Bacteria"/>
</dbReference>
<dbReference type="HOGENOM" id="CLU_104149_1_0_3"/>
<dbReference type="OrthoDB" id="486949at2"/>
<dbReference type="Proteomes" id="UP000001423">
    <property type="component" value="Chromosome"/>
</dbReference>
<dbReference type="GO" id="GO:0009523">
    <property type="term" value="C:photosystem II"/>
    <property type="evidence" value="ECO:0007669"/>
    <property type="project" value="UniProtKB-KW"/>
</dbReference>
<dbReference type="GO" id="GO:0031676">
    <property type="term" value="C:plasma membrane-derived thylakoid membrane"/>
    <property type="evidence" value="ECO:0007669"/>
    <property type="project" value="UniProtKB-SubCell"/>
</dbReference>
<dbReference type="GO" id="GO:0009055">
    <property type="term" value="F:electron transfer activity"/>
    <property type="evidence" value="ECO:0007669"/>
    <property type="project" value="InterPro"/>
</dbReference>
<dbReference type="GO" id="GO:0020037">
    <property type="term" value="F:heme binding"/>
    <property type="evidence" value="ECO:0007669"/>
    <property type="project" value="InterPro"/>
</dbReference>
<dbReference type="GO" id="GO:0005506">
    <property type="term" value="F:iron ion binding"/>
    <property type="evidence" value="ECO:0007669"/>
    <property type="project" value="InterPro"/>
</dbReference>
<dbReference type="GO" id="GO:0019684">
    <property type="term" value="P:photosynthesis, light reaction"/>
    <property type="evidence" value="ECO:0007669"/>
    <property type="project" value="UniProtKB-UniRule"/>
</dbReference>
<dbReference type="GO" id="GO:0022904">
    <property type="term" value="P:respiratory electron transport chain"/>
    <property type="evidence" value="ECO:0007669"/>
    <property type="project" value="InterPro"/>
</dbReference>
<dbReference type="Gene3D" id="1.10.760.10">
    <property type="entry name" value="Cytochrome c-like domain"/>
    <property type="match status" value="1"/>
</dbReference>
<dbReference type="HAMAP" id="MF_01378">
    <property type="entry name" value="PSII_Cyt550"/>
    <property type="match status" value="1"/>
</dbReference>
<dbReference type="InterPro" id="IPR009056">
    <property type="entry name" value="Cyt_c-like_dom"/>
</dbReference>
<dbReference type="InterPro" id="IPR036909">
    <property type="entry name" value="Cyt_c-like_dom_sf"/>
</dbReference>
<dbReference type="InterPro" id="IPR029490">
    <property type="entry name" value="Cytochrom_C550"/>
</dbReference>
<dbReference type="InterPro" id="IPR017851">
    <property type="entry name" value="PsbV_cyt_c550"/>
</dbReference>
<dbReference type="InterPro" id="IPR016003">
    <property type="entry name" value="PsbV_cyt_c550-like"/>
</dbReference>
<dbReference type="NCBIfam" id="TIGR03045">
    <property type="entry name" value="PS_II_C550"/>
    <property type="match status" value="1"/>
</dbReference>
<dbReference type="Pfam" id="PF14495">
    <property type="entry name" value="Cytochrom_C550"/>
    <property type="match status" value="1"/>
</dbReference>
<dbReference type="PIRSF" id="PIRSF005890">
    <property type="entry name" value="Phot_II_cyt_c550"/>
    <property type="match status" value="1"/>
</dbReference>
<dbReference type="SUPFAM" id="SSF46626">
    <property type="entry name" value="Cytochrome c"/>
    <property type="match status" value="1"/>
</dbReference>
<dbReference type="PROSITE" id="PS51007">
    <property type="entry name" value="CYTC"/>
    <property type="match status" value="1"/>
</dbReference>
<protein>
    <recommendedName>
        <fullName evidence="1">Photosystem II extrinsic protein V</fullName>
        <shortName evidence="1">PsbV</shortName>
    </recommendedName>
    <alternativeName>
        <fullName evidence="1">Cytochrome c-550</fullName>
    </alternativeName>
    <alternativeName>
        <fullName evidence="1">Cytochrome c550</fullName>
    </alternativeName>
    <alternativeName>
        <fullName evidence="1">Low-potential cytochrome c</fullName>
    </alternativeName>
</protein>
<name>CY550_PROMM</name>
<reference key="1">
    <citation type="journal article" date="2003" name="Nature">
        <title>Genome divergence in two Prochlorococcus ecotypes reflects oceanic niche differentiation.</title>
        <authorList>
            <person name="Rocap G."/>
            <person name="Larimer F.W."/>
            <person name="Lamerdin J.E."/>
            <person name="Malfatti S."/>
            <person name="Chain P."/>
            <person name="Ahlgren N.A."/>
            <person name="Arellano A."/>
            <person name="Coleman M."/>
            <person name="Hauser L."/>
            <person name="Hess W.R."/>
            <person name="Johnson Z.I."/>
            <person name="Land M.L."/>
            <person name="Lindell D."/>
            <person name="Post A.F."/>
            <person name="Regala W."/>
            <person name="Shah M."/>
            <person name="Shaw S.L."/>
            <person name="Steglich C."/>
            <person name="Sullivan M.B."/>
            <person name="Ting C.S."/>
            <person name="Tolonen A."/>
            <person name="Webb E.A."/>
            <person name="Zinser E.R."/>
            <person name="Chisholm S.W."/>
        </authorList>
    </citation>
    <scope>NUCLEOTIDE SEQUENCE [LARGE SCALE GENOMIC DNA]</scope>
    <source>
        <strain>MIT 9313</strain>
    </source>
</reference>
<organism>
    <name type="scientific">Prochlorococcus marinus (strain MIT 9313)</name>
    <dbReference type="NCBI Taxonomy" id="74547"/>
    <lineage>
        <taxon>Bacteria</taxon>
        <taxon>Bacillati</taxon>
        <taxon>Cyanobacteriota</taxon>
        <taxon>Cyanophyceae</taxon>
        <taxon>Synechococcales</taxon>
        <taxon>Prochlorococcaceae</taxon>
        <taxon>Prochlorococcus</taxon>
    </lineage>
</organism>
<proteinExistence type="inferred from homology"/>
<comment type="function">
    <text evidence="1">One of the extrinsic, lumenal subunits of photosystem II (PSII). PSII is a light-driven water plastoquinone oxidoreductase, using light energy to abstract electrons from H(2)O, generating a proton gradient subsequently used for ATP formation. The extrinsic proteins stabilize the structure of photosystem II oxygen-evolving complex (OEC), the ion environment of oxygen evolution and protect the OEC against heat-induced inactivation. Low-potential cytochrome c that plays a role in the OEC of PSII.</text>
</comment>
<comment type="cofactor">
    <cofactor evidence="1">
        <name>heme c</name>
        <dbReference type="ChEBI" id="CHEBI:61717"/>
    </cofactor>
    <text evidence="1">Binds 1 heme c group covalently per subunit.</text>
</comment>
<comment type="subunit">
    <text evidence="2">PSII is composed of 1 copy each of membrane proteins PsbA, PsbB, PsbC, PsbD, PsbE, PsbF, PsbH, PsbI, PsbJ, PsbK, PsbL, PsbM, PsbT, PsbX, PsbY, Psb30/Ycf12, peripheral proteins PsbO, CyanoQ (PsbQ), PsbU, PsbV and a large number of cofactors. It forms dimeric complexes.</text>
</comment>
<comment type="subcellular location">
    <subcellularLocation>
        <location evidence="1">Cellular thylakoid membrane</location>
        <topology evidence="1">Peripheral membrane protein</topology>
        <orientation evidence="1">Lumenal side</orientation>
    </subcellularLocation>
    <text evidence="1">Associated with photosystem II at the lumenal side of the thylakoid membrane.</text>
</comment>
<comment type="similarity">
    <text evidence="1">Belongs to the cytochrome c family. PsbV subfamily.</text>
</comment>
<accession>Q7V5W0</accession>